<proteinExistence type="inferred from homology"/>
<comment type="function">
    <text evidence="1">Catalyzes the conversion of dihydroorotate to orotate with quinone as electron acceptor.</text>
</comment>
<comment type="catalytic activity">
    <reaction evidence="1">
        <text>(S)-dihydroorotate + a quinone = orotate + a quinol</text>
        <dbReference type="Rhea" id="RHEA:30187"/>
        <dbReference type="ChEBI" id="CHEBI:24646"/>
        <dbReference type="ChEBI" id="CHEBI:30839"/>
        <dbReference type="ChEBI" id="CHEBI:30864"/>
        <dbReference type="ChEBI" id="CHEBI:132124"/>
        <dbReference type="EC" id="1.3.5.2"/>
    </reaction>
</comment>
<comment type="cofactor">
    <cofactor evidence="1">
        <name>FMN</name>
        <dbReference type="ChEBI" id="CHEBI:58210"/>
    </cofactor>
    <text evidence="1">Binds 1 FMN per subunit.</text>
</comment>
<comment type="pathway">
    <text evidence="1">Pyrimidine metabolism; UMP biosynthesis via de novo pathway; orotate from (S)-dihydroorotate (quinone route): step 1/1.</text>
</comment>
<comment type="subunit">
    <text evidence="1">Monomer.</text>
</comment>
<comment type="subcellular location">
    <subcellularLocation>
        <location evidence="1">Cell membrane</location>
        <topology evidence="1">Peripheral membrane protein</topology>
    </subcellularLocation>
</comment>
<comment type="similarity">
    <text evidence="1">Belongs to the dihydroorotate dehydrogenase family. Type 2 subfamily.</text>
</comment>
<evidence type="ECO:0000255" key="1">
    <source>
        <dbReference type="HAMAP-Rule" id="MF_00225"/>
    </source>
</evidence>
<protein>
    <recommendedName>
        <fullName evidence="1">Dihydroorotate dehydrogenase (quinone)</fullName>
        <ecNumber evidence="1">1.3.5.2</ecNumber>
    </recommendedName>
    <alternativeName>
        <fullName evidence="1">DHOdehase</fullName>
        <shortName evidence="1">DHOD</shortName>
        <shortName evidence="1">DHODase</shortName>
    </alternativeName>
    <alternativeName>
        <fullName evidence="1">Dihydroorotate oxidase</fullName>
    </alternativeName>
</protein>
<name>PYRD_NEIM0</name>
<reference key="1">
    <citation type="journal article" date="2008" name="Genomics">
        <title>Characterization of ST-4821 complex, a unique Neisseria meningitidis clone.</title>
        <authorList>
            <person name="Peng J."/>
            <person name="Yang L."/>
            <person name="Yang F."/>
            <person name="Yang J."/>
            <person name="Yan Y."/>
            <person name="Nie H."/>
            <person name="Zhang X."/>
            <person name="Xiong Z."/>
            <person name="Jiang Y."/>
            <person name="Cheng F."/>
            <person name="Xu X."/>
            <person name="Chen S."/>
            <person name="Sun L."/>
            <person name="Li W."/>
            <person name="Shen Y."/>
            <person name="Shao Z."/>
            <person name="Liang X."/>
            <person name="Xu J."/>
            <person name="Jin Q."/>
        </authorList>
    </citation>
    <scope>NUCLEOTIDE SEQUENCE [LARGE SCALE GENOMIC DNA]</scope>
    <source>
        <strain>053442</strain>
    </source>
</reference>
<dbReference type="EC" id="1.3.5.2" evidence="1"/>
<dbReference type="EMBL" id="CP000381">
    <property type="protein sequence ID" value="ABX74055.1"/>
    <property type="molecule type" value="Genomic_DNA"/>
</dbReference>
<dbReference type="RefSeq" id="WP_012222095.1">
    <property type="nucleotide sequence ID" value="NC_010120.1"/>
</dbReference>
<dbReference type="SMR" id="A9M3G1"/>
<dbReference type="KEGG" id="nmn:NMCC_1924"/>
<dbReference type="HOGENOM" id="CLU_013640_2_0_4"/>
<dbReference type="UniPathway" id="UPA00070">
    <property type="reaction ID" value="UER00946"/>
</dbReference>
<dbReference type="Proteomes" id="UP000001177">
    <property type="component" value="Chromosome"/>
</dbReference>
<dbReference type="GO" id="GO:0005737">
    <property type="term" value="C:cytoplasm"/>
    <property type="evidence" value="ECO:0007669"/>
    <property type="project" value="InterPro"/>
</dbReference>
<dbReference type="GO" id="GO:0005886">
    <property type="term" value="C:plasma membrane"/>
    <property type="evidence" value="ECO:0007669"/>
    <property type="project" value="UniProtKB-SubCell"/>
</dbReference>
<dbReference type="GO" id="GO:0106430">
    <property type="term" value="F:dihydroorotate dehydrogenase (quinone) activity"/>
    <property type="evidence" value="ECO:0007669"/>
    <property type="project" value="UniProtKB-EC"/>
</dbReference>
<dbReference type="GO" id="GO:0006207">
    <property type="term" value="P:'de novo' pyrimidine nucleobase biosynthetic process"/>
    <property type="evidence" value="ECO:0007669"/>
    <property type="project" value="InterPro"/>
</dbReference>
<dbReference type="GO" id="GO:0044205">
    <property type="term" value="P:'de novo' UMP biosynthetic process"/>
    <property type="evidence" value="ECO:0007669"/>
    <property type="project" value="UniProtKB-UniRule"/>
</dbReference>
<dbReference type="CDD" id="cd04738">
    <property type="entry name" value="DHOD_2_like"/>
    <property type="match status" value="1"/>
</dbReference>
<dbReference type="FunFam" id="3.20.20.70:FF:000028">
    <property type="entry name" value="Dihydroorotate dehydrogenase (quinone)"/>
    <property type="match status" value="1"/>
</dbReference>
<dbReference type="Gene3D" id="3.20.20.70">
    <property type="entry name" value="Aldolase class I"/>
    <property type="match status" value="1"/>
</dbReference>
<dbReference type="HAMAP" id="MF_00225">
    <property type="entry name" value="DHO_dh_type2"/>
    <property type="match status" value="1"/>
</dbReference>
<dbReference type="InterPro" id="IPR013785">
    <property type="entry name" value="Aldolase_TIM"/>
</dbReference>
<dbReference type="InterPro" id="IPR050074">
    <property type="entry name" value="DHO_dehydrogenase"/>
</dbReference>
<dbReference type="InterPro" id="IPR012135">
    <property type="entry name" value="Dihydroorotate_DH_1_2"/>
</dbReference>
<dbReference type="InterPro" id="IPR005719">
    <property type="entry name" value="Dihydroorotate_DH_2"/>
</dbReference>
<dbReference type="InterPro" id="IPR005720">
    <property type="entry name" value="Dihydroorotate_DH_cat"/>
</dbReference>
<dbReference type="InterPro" id="IPR001295">
    <property type="entry name" value="Dihydroorotate_DH_CS"/>
</dbReference>
<dbReference type="NCBIfam" id="NF003644">
    <property type="entry name" value="PRK05286.1-1"/>
    <property type="match status" value="1"/>
</dbReference>
<dbReference type="NCBIfam" id="NF003645">
    <property type="entry name" value="PRK05286.1-2"/>
    <property type="match status" value="1"/>
</dbReference>
<dbReference type="NCBIfam" id="NF003646">
    <property type="entry name" value="PRK05286.1-4"/>
    <property type="match status" value="1"/>
</dbReference>
<dbReference type="NCBIfam" id="NF003652">
    <property type="entry name" value="PRK05286.2-5"/>
    <property type="match status" value="1"/>
</dbReference>
<dbReference type="NCBIfam" id="TIGR01036">
    <property type="entry name" value="pyrD_sub2"/>
    <property type="match status" value="1"/>
</dbReference>
<dbReference type="PANTHER" id="PTHR48109:SF4">
    <property type="entry name" value="DIHYDROOROTATE DEHYDROGENASE (QUINONE), MITOCHONDRIAL"/>
    <property type="match status" value="1"/>
</dbReference>
<dbReference type="PANTHER" id="PTHR48109">
    <property type="entry name" value="DIHYDROOROTATE DEHYDROGENASE (QUINONE), MITOCHONDRIAL-RELATED"/>
    <property type="match status" value="1"/>
</dbReference>
<dbReference type="Pfam" id="PF01180">
    <property type="entry name" value="DHO_dh"/>
    <property type="match status" value="1"/>
</dbReference>
<dbReference type="PIRSF" id="PIRSF000164">
    <property type="entry name" value="DHO_oxidase"/>
    <property type="match status" value="1"/>
</dbReference>
<dbReference type="SUPFAM" id="SSF51395">
    <property type="entry name" value="FMN-linked oxidoreductases"/>
    <property type="match status" value="1"/>
</dbReference>
<dbReference type="PROSITE" id="PS00911">
    <property type="entry name" value="DHODEHASE_1"/>
    <property type="match status" value="1"/>
</dbReference>
<feature type="chain" id="PRO_1000078161" description="Dihydroorotate dehydrogenase (quinone)">
    <location>
        <begin position="1"/>
        <end position="341"/>
    </location>
</feature>
<feature type="active site" description="Nucleophile" evidence="1">
    <location>
        <position position="172"/>
    </location>
</feature>
<feature type="binding site" evidence="1">
    <location>
        <begin position="59"/>
        <end position="63"/>
    </location>
    <ligand>
        <name>FMN</name>
        <dbReference type="ChEBI" id="CHEBI:58210"/>
    </ligand>
</feature>
<feature type="binding site" evidence="1">
    <location>
        <position position="63"/>
    </location>
    <ligand>
        <name>substrate</name>
    </ligand>
</feature>
<feature type="binding site" evidence="1">
    <location>
        <position position="83"/>
    </location>
    <ligand>
        <name>FMN</name>
        <dbReference type="ChEBI" id="CHEBI:58210"/>
    </ligand>
</feature>
<feature type="binding site" evidence="1">
    <location>
        <begin position="108"/>
        <end position="112"/>
    </location>
    <ligand>
        <name>substrate</name>
    </ligand>
</feature>
<feature type="binding site" evidence="1">
    <location>
        <position position="136"/>
    </location>
    <ligand>
        <name>FMN</name>
        <dbReference type="ChEBI" id="CHEBI:58210"/>
    </ligand>
</feature>
<feature type="binding site" evidence="1">
    <location>
        <position position="169"/>
    </location>
    <ligand>
        <name>FMN</name>
        <dbReference type="ChEBI" id="CHEBI:58210"/>
    </ligand>
</feature>
<feature type="binding site" evidence="1">
    <location>
        <position position="169"/>
    </location>
    <ligand>
        <name>substrate</name>
    </ligand>
</feature>
<feature type="binding site" evidence="1">
    <location>
        <position position="174"/>
    </location>
    <ligand>
        <name>substrate</name>
    </ligand>
</feature>
<feature type="binding site" evidence="1">
    <location>
        <position position="214"/>
    </location>
    <ligand>
        <name>FMN</name>
        <dbReference type="ChEBI" id="CHEBI:58210"/>
    </ligand>
</feature>
<feature type="binding site" evidence="1">
    <location>
        <position position="242"/>
    </location>
    <ligand>
        <name>FMN</name>
        <dbReference type="ChEBI" id="CHEBI:58210"/>
    </ligand>
</feature>
<feature type="binding site" evidence="1">
    <location>
        <begin position="243"/>
        <end position="244"/>
    </location>
    <ligand>
        <name>substrate</name>
    </ligand>
</feature>
<feature type="binding site" evidence="1">
    <location>
        <position position="265"/>
    </location>
    <ligand>
        <name>FMN</name>
        <dbReference type="ChEBI" id="CHEBI:58210"/>
    </ligand>
</feature>
<feature type="binding site" evidence="1">
    <location>
        <position position="294"/>
    </location>
    <ligand>
        <name>FMN</name>
        <dbReference type="ChEBI" id="CHEBI:58210"/>
    </ligand>
</feature>
<feature type="binding site" evidence="1">
    <location>
        <begin position="315"/>
        <end position="316"/>
    </location>
    <ligand>
        <name>FMN</name>
        <dbReference type="ChEBI" id="CHEBI:58210"/>
    </ligand>
</feature>
<gene>
    <name evidence="1" type="primary">pyrD</name>
    <name type="ordered locus">NMCC_1924</name>
</gene>
<accession>A9M3G1</accession>
<organism>
    <name type="scientific">Neisseria meningitidis serogroup C (strain 053442)</name>
    <dbReference type="NCBI Taxonomy" id="374833"/>
    <lineage>
        <taxon>Bacteria</taxon>
        <taxon>Pseudomonadati</taxon>
        <taxon>Pseudomonadota</taxon>
        <taxon>Betaproteobacteria</taxon>
        <taxon>Neisseriales</taxon>
        <taxon>Neisseriaceae</taxon>
        <taxon>Neisseria</taxon>
    </lineage>
</organism>
<sequence length="341" mass="36358">MYPLARRILFALDAEKAHHFTLDALNMVYKLGLIPVTGNRTKPVKLMGLDLPNPVGLAAGLDKNGEYIDALGALGFGFIEIGTVTPNPQPGNPQPRLFRVPEYQGIINRMGFNNHGIDAMIQNIEKSKFSGVLGINIGKNAVTPIENAADDYLICLEKAYAHASYITVNISSPNTKNLRALQGGDELSALLEALKNKQAQLASVHGKYVPLAVKIAPDLDEAQIEDIAHVVKSVEMDGIIATNTTIDKSSLGSHPLAGEQGGLSGLPVHEKSNRVLKLLADHIDGKLPIIGVGGIMEGRDAAEKIRLGATAVQVYSGLIYKGPALVKECLKALARSAQNAV</sequence>
<keyword id="KW-1003">Cell membrane</keyword>
<keyword id="KW-0285">Flavoprotein</keyword>
<keyword id="KW-0288">FMN</keyword>
<keyword id="KW-0472">Membrane</keyword>
<keyword id="KW-0560">Oxidoreductase</keyword>
<keyword id="KW-0665">Pyrimidine biosynthesis</keyword>